<protein>
    <recommendedName>
        <fullName evidence="1">Cysteine desulfurase</fullName>
        <ecNumber evidence="1">2.8.1.7</ecNumber>
    </recommendedName>
    <alternativeName>
        <fullName evidence="1">Selenocysteine beta-lyase</fullName>
        <shortName evidence="1">SCL</shortName>
    </alternativeName>
    <alternativeName>
        <fullName evidence="1">Selenocysteine lyase</fullName>
        <ecNumber evidence="1">4.4.1.16</ecNumber>
    </alternativeName>
    <alternativeName>
        <fullName evidence="1">Selenocysteine reductase</fullName>
    </alternativeName>
</protein>
<accession>B6IBB9</accession>
<keyword id="KW-0963">Cytoplasm</keyword>
<keyword id="KW-0456">Lyase</keyword>
<keyword id="KW-0663">Pyridoxal phosphate</keyword>
<keyword id="KW-0808">Transferase</keyword>
<gene>
    <name evidence="1" type="primary">sufS</name>
    <name type="ordered locus">ECSE_1803</name>
</gene>
<sequence>MTFSVDKVRADFPVLSREVNGLPLAYLDSAASAQKPSQVIDAEAEFYRHGYAAVHRGIHTLSAQATEKMENVRKRASLFINARSAEELVFVRGTTEGINLVANSWGNSNVRAGDNIIISQMEHHANIVPWQMLCARVGAELRVIPLNPDGTLQLETLPTLFDEKTRLLAITHVSNVLGTENPLAEMITLAHQHGAKVLVDGAQAVMHHPVDVQALDCDFYVFSGHKLYGPTGIGILYVKEALLQEMPPWEGGGSMIATVSLSEGTTWTKAPWRFEAGTPNTGGIIGLGAALEYVSALGLNSIAEYEQNLMHYALSQLESVPDLTLYGPQNRLGVIAFNLGKHHAYDVGSFLDNYGIAVRTGHHCAMPLMAYYNVPAMCRASLAMYNTHEEVDRLVTGLQRIHRLLG</sequence>
<comment type="function">
    <text evidence="1">Cysteine desulfurases mobilize the sulfur from L-cysteine to yield L-alanine, an essential step in sulfur metabolism for biosynthesis of a variety of sulfur-containing biomolecules. Component of the suf operon, which is activated and required under specific conditions such as oxidative stress and iron limitation. Acts as a potent selenocysteine lyase in vitro, that mobilizes selenium from L-selenocysteine. Selenocysteine lyase activity is however unsure in vivo.</text>
</comment>
<comment type="catalytic activity">
    <reaction evidence="1">
        <text>(sulfur carrier)-H + L-cysteine = (sulfur carrier)-SH + L-alanine</text>
        <dbReference type="Rhea" id="RHEA:43892"/>
        <dbReference type="Rhea" id="RHEA-COMP:14737"/>
        <dbReference type="Rhea" id="RHEA-COMP:14739"/>
        <dbReference type="ChEBI" id="CHEBI:29917"/>
        <dbReference type="ChEBI" id="CHEBI:35235"/>
        <dbReference type="ChEBI" id="CHEBI:57972"/>
        <dbReference type="ChEBI" id="CHEBI:64428"/>
        <dbReference type="EC" id="2.8.1.7"/>
    </reaction>
</comment>
<comment type="catalytic activity">
    <reaction evidence="1">
        <text>L-selenocysteine + AH2 = hydrogenselenide + L-alanine + A + H(+)</text>
        <dbReference type="Rhea" id="RHEA:11632"/>
        <dbReference type="ChEBI" id="CHEBI:13193"/>
        <dbReference type="ChEBI" id="CHEBI:15378"/>
        <dbReference type="ChEBI" id="CHEBI:17499"/>
        <dbReference type="ChEBI" id="CHEBI:29317"/>
        <dbReference type="ChEBI" id="CHEBI:57843"/>
        <dbReference type="ChEBI" id="CHEBI:57972"/>
        <dbReference type="EC" id="4.4.1.16"/>
    </reaction>
</comment>
<comment type="cofactor">
    <cofactor evidence="1">
        <name>pyridoxal 5'-phosphate</name>
        <dbReference type="ChEBI" id="CHEBI:597326"/>
    </cofactor>
</comment>
<comment type="pathway">
    <text evidence="1">Cofactor biosynthesis; iron-sulfur cluster biosynthesis.</text>
</comment>
<comment type="subunit">
    <text evidence="1">Homodimer. Interacts with SufE and the SufBCD complex composed of SufB, SufC and SufD. The interaction with SufE is required to mediate the direct transfer of the sulfur atom from the S-sulfanylcysteine.</text>
</comment>
<comment type="subcellular location">
    <subcellularLocation>
        <location evidence="1">Cytoplasm</location>
    </subcellularLocation>
</comment>
<comment type="similarity">
    <text evidence="1">Belongs to the class-V pyridoxal-phosphate-dependent aminotransferase family. Csd subfamily.</text>
</comment>
<organism>
    <name type="scientific">Escherichia coli (strain SE11)</name>
    <dbReference type="NCBI Taxonomy" id="409438"/>
    <lineage>
        <taxon>Bacteria</taxon>
        <taxon>Pseudomonadati</taxon>
        <taxon>Pseudomonadota</taxon>
        <taxon>Gammaproteobacteria</taxon>
        <taxon>Enterobacterales</taxon>
        <taxon>Enterobacteriaceae</taxon>
        <taxon>Escherichia</taxon>
    </lineage>
</organism>
<proteinExistence type="inferred from homology"/>
<reference key="1">
    <citation type="journal article" date="2008" name="DNA Res.">
        <title>Complete genome sequence and comparative analysis of the wild-type commensal Escherichia coli strain SE11 isolated from a healthy adult.</title>
        <authorList>
            <person name="Oshima K."/>
            <person name="Toh H."/>
            <person name="Ogura Y."/>
            <person name="Sasamoto H."/>
            <person name="Morita H."/>
            <person name="Park S.-H."/>
            <person name="Ooka T."/>
            <person name="Iyoda S."/>
            <person name="Taylor T.D."/>
            <person name="Hayashi T."/>
            <person name="Itoh K."/>
            <person name="Hattori M."/>
        </authorList>
    </citation>
    <scope>NUCLEOTIDE SEQUENCE [LARGE SCALE GENOMIC DNA]</scope>
    <source>
        <strain>SE11</strain>
    </source>
</reference>
<dbReference type="EC" id="2.8.1.7" evidence="1"/>
<dbReference type="EC" id="4.4.1.16" evidence="1"/>
<dbReference type="EMBL" id="AP009240">
    <property type="protein sequence ID" value="BAG77327.1"/>
    <property type="molecule type" value="Genomic_DNA"/>
</dbReference>
<dbReference type="RefSeq" id="WP_000144578.1">
    <property type="nucleotide sequence ID" value="NC_011415.1"/>
</dbReference>
<dbReference type="SMR" id="B6IBB9"/>
<dbReference type="KEGG" id="ecy:ECSE_1803"/>
<dbReference type="HOGENOM" id="CLU_003433_2_5_6"/>
<dbReference type="UniPathway" id="UPA00266"/>
<dbReference type="Proteomes" id="UP000008199">
    <property type="component" value="Chromosome"/>
</dbReference>
<dbReference type="GO" id="GO:0005737">
    <property type="term" value="C:cytoplasm"/>
    <property type="evidence" value="ECO:0007669"/>
    <property type="project" value="UniProtKB-SubCell"/>
</dbReference>
<dbReference type="GO" id="GO:0031071">
    <property type="term" value="F:cysteine desulfurase activity"/>
    <property type="evidence" value="ECO:0007669"/>
    <property type="project" value="UniProtKB-UniRule"/>
</dbReference>
<dbReference type="GO" id="GO:0030170">
    <property type="term" value="F:pyridoxal phosphate binding"/>
    <property type="evidence" value="ECO:0007669"/>
    <property type="project" value="InterPro"/>
</dbReference>
<dbReference type="GO" id="GO:0009000">
    <property type="term" value="F:selenocysteine lyase activity"/>
    <property type="evidence" value="ECO:0007669"/>
    <property type="project" value="UniProtKB-UniRule"/>
</dbReference>
<dbReference type="GO" id="GO:0006534">
    <property type="term" value="P:cysteine metabolic process"/>
    <property type="evidence" value="ECO:0007669"/>
    <property type="project" value="InterPro"/>
</dbReference>
<dbReference type="CDD" id="cd06453">
    <property type="entry name" value="SufS_like"/>
    <property type="match status" value="1"/>
</dbReference>
<dbReference type="FunFam" id="3.40.640.10:FF:000042">
    <property type="entry name" value="Cysteine desulfurase"/>
    <property type="match status" value="1"/>
</dbReference>
<dbReference type="Gene3D" id="3.90.1150.10">
    <property type="entry name" value="Aspartate Aminotransferase, domain 1"/>
    <property type="match status" value="1"/>
</dbReference>
<dbReference type="Gene3D" id="3.40.640.10">
    <property type="entry name" value="Type I PLP-dependent aspartate aminotransferase-like (Major domain)"/>
    <property type="match status" value="1"/>
</dbReference>
<dbReference type="HAMAP" id="MF_01831">
    <property type="entry name" value="SufS_aminotrans_5"/>
    <property type="match status" value="1"/>
</dbReference>
<dbReference type="InterPro" id="IPR000192">
    <property type="entry name" value="Aminotrans_V_dom"/>
</dbReference>
<dbReference type="InterPro" id="IPR020578">
    <property type="entry name" value="Aminotrans_V_PyrdxlP_BS"/>
</dbReference>
<dbReference type="InterPro" id="IPR010970">
    <property type="entry name" value="Cys_dSase_SufS"/>
</dbReference>
<dbReference type="InterPro" id="IPR015424">
    <property type="entry name" value="PyrdxlP-dep_Trfase"/>
</dbReference>
<dbReference type="InterPro" id="IPR015421">
    <property type="entry name" value="PyrdxlP-dep_Trfase_major"/>
</dbReference>
<dbReference type="InterPro" id="IPR015422">
    <property type="entry name" value="PyrdxlP-dep_Trfase_small"/>
</dbReference>
<dbReference type="NCBIfam" id="NF006791">
    <property type="entry name" value="PRK09295.1"/>
    <property type="match status" value="1"/>
</dbReference>
<dbReference type="NCBIfam" id="TIGR01979">
    <property type="entry name" value="sufS"/>
    <property type="match status" value="1"/>
</dbReference>
<dbReference type="PANTHER" id="PTHR43586">
    <property type="entry name" value="CYSTEINE DESULFURASE"/>
    <property type="match status" value="1"/>
</dbReference>
<dbReference type="PANTHER" id="PTHR43586:SF25">
    <property type="entry name" value="CYSTEINE DESULFURASE"/>
    <property type="match status" value="1"/>
</dbReference>
<dbReference type="Pfam" id="PF00266">
    <property type="entry name" value="Aminotran_5"/>
    <property type="match status" value="1"/>
</dbReference>
<dbReference type="SUPFAM" id="SSF53383">
    <property type="entry name" value="PLP-dependent transferases"/>
    <property type="match status" value="1"/>
</dbReference>
<dbReference type="PROSITE" id="PS00595">
    <property type="entry name" value="AA_TRANSFER_CLASS_5"/>
    <property type="match status" value="1"/>
</dbReference>
<evidence type="ECO:0000255" key="1">
    <source>
        <dbReference type="HAMAP-Rule" id="MF_01831"/>
    </source>
</evidence>
<feature type="chain" id="PRO_1000188300" description="Cysteine desulfurase">
    <location>
        <begin position="1"/>
        <end position="406"/>
    </location>
</feature>
<feature type="active site" description="Cysteine persulfide intermediate" evidence="1">
    <location>
        <position position="364"/>
    </location>
</feature>
<feature type="modified residue" description="N6-(pyridoxal phosphate)lysine" evidence="1">
    <location>
        <position position="226"/>
    </location>
</feature>
<name>SUFS_ECOSE</name>